<organism>
    <name type="scientific">Syntrophomonas wolfei subsp. wolfei (strain DSM 2245B / Goettingen)</name>
    <dbReference type="NCBI Taxonomy" id="335541"/>
    <lineage>
        <taxon>Bacteria</taxon>
        <taxon>Bacillati</taxon>
        <taxon>Bacillota</taxon>
        <taxon>Clostridia</taxon>
        <taxon>Eubacteriales</taxon>
        <taxon>Syntrophomonadaceae</taxon>
        <taxon>Syntrophomonas</taxon>
    </lineage>
</organism>
<reference key="1">
    <citation type="journal article" date="2010" name="Environ. Microbiol.">
        <title>The genome of Syntrophomonas wolfei: new insights into syntrophic metabolism and biohydrogen production.</title>
        <authorList>
            <person name="Sieber J.R."/>
            <person name="Sims D.R."/>
            <person name="Han C."/>
            <person name="Kim E."/>
            <person name="Lykidis A."/>
            <person name="Lapidus A.L."/>
            <person name="McDonnald E."/>
            <person name="Rohlin L."/>
            <person name="Culley D.E."/>
            <person name="Gunsalus R."/>
            <person name="McInerney M.J."/>
        </authorList>
    </citation>
    <scope>NUCLEOTIDE SEQUENCE [LARGE SCALE GENOMIC DNA]</scope>
    <source>
        <strain>DSM 2245B / Goettingen</strain>
    </source>
</reference>
<comment type="function">
    <text evidence="1">Catalyzes the last two sequential reactions in the de novo biosynthetic pathway for UDP-N-acetylglucosamine (UDP-GlcNAc). The C-terminal domain catalyzes the transfer of acetyl group from acetyl coenzyme A to glucosamine-1-phosphate (GlcN-1-P) to produce N-acetylglucosamine-1-phosphate (GlcNAc-1-P), which is converted into UDP-GlcNAc by the transfer of uridine 5-monophosphate (from uridine 5-triphosphate), a reaction catalyzed by the N-terminal domain.</text>
</comment>
<comment type="catalytic activity">
    <reaction evidence="1">
        <text>alpha-D-glucosamine 1-phosphate + acetyl-CoA = N-acetyl-alpha-D-glucosamine 1-phosphate + CoA + H(+)</text>
        <dbReference type="Rhea" id="RHEA:13725"/>
        <dbReference type="ChEBI" id="CHEBI:15378"/>
        <dbReference type="ChEBI" id="CHEBI:57287"/>
        <dbReference type="ChEBI" id="CHEBI:57288"/>
        <dbReference type="ChEBI" id="CHEBI:57776"/>
        <dbReference type="ChEBI" id="CHEBI:58516"/>
        <dbReference type="EC" id="2.3.1.157"/>
    </reaction>
</comment>
<comment type="catalytic activity">
    <reaction evidence="1">
        <text>N-acetyl-alpha-D-glucosamine 1-phosphate + UTP + H(+) = UDP-N-acetyl-alpha-D-glucosamine + diphosphate</text>
        <dbReference type="Rhea" id="RHEA:13509"/>
        <dbReference type="ChEBI" id="CHEBI:15378"/>
        <dbReference type="ChEBI" id="CHEBI:33019"/>
        <dbReference type="ChEBI" id="CHEBI:46398"/>
        <dbReference type="ChEBI" id="CHEBI:57705"/>
        <dbReference type="ChEBI" id="CHEBI:57776"/>
        <dbReference type="EC" id="2.7.7.23"/>
    </reaction>
</comment>
<comment type="cofactor">
    <cofactor evidence="1">
        <name>Mg(2+)</name>
        <dbReference type="ChEBI" id="CHEBI:18420"/>
    </cofactor>
    <text evidence="1">Binds 1 Mg(2+) ion per subunit.</text>
</comment>
<comment type="pathway">
    <text evidence="1">Nucleotide-sugar biosynthesis; UDP-N-acetyl-alpha-D-glucosamine biosynthesis; N-acetyl-alpha-D-glucosamine 1-phosphate from alpha-D-glucosamine 6-phosphate (route II): step 2/2.</text>
</comment>
<comment type="pathway">
    <text evidence="1">Nucleotide-sugar biosynthesis; UDP-N-acetyl-alpha-D-glucosamine biosynthesis; UDP-N-acetyl-alpha-D-glucosamine from N-acetyl-alpha-D-glucosamine 1-phosphate: step 1/1.</text>
</comment>
<comment type="pathway">
    <text evidence="1">Bacterial outer membrane biogenesis; LPS lipid A biosynthesis.</text>
</comment>
<comment type="subunit">
    <text evidence="1">Homotrimer.</text>
</comment>
<comment type="subcellular location">
    <subcellularLocation>
        <location evidence="1">Cytoplasm</location>
    </subcellularLocation>
</comment>
<comment type="similarity">
    <text evidence="1">In the N-terminal section; belongs to the N-acetylglucosamine-1-phosphate uridyltransferase family.</text>
</comment>
<comment type="similarity">
    <text evidence="1">In the C-terminal section; belongs to the transferase hexapeptide repeat family.</text>
</comment>
<keyword id="KW-0012">Acyltransferase</keyword>
<keyword id="KW-0133">Cell shape</keyword>
<keyword id="KW-0961">Cell wall biogenesis/degradation</keyword>
<keyword id="KW-0963">Cytoplasm</keyword>
<keyword id="KW-0460">Magnesium</keyword>
<keyword id="KW-0479">Metal-binding</keyword>
<keyword id="KW-0511">Multifunctional enzyme</keyword>
<keyword id="KW-0548">Nucleotidyltransferase</keyword>
<keyword id="KW-0573">Peptidoglycan synthesis</keyword>
<keyword id="KW-1185">Reference proteome</keyword>
<keyword id="KW-0677">Repeat</keyword>
<keyword id="KW-0808">Transferase</keyword>
<sequence>MKLSAVILAAGKGLRMRSDLPKVAHRVAGKPIILHVIQAVKEAGIEDIVVVVGHGREVVQEICSGEKIRFVLQEQQLGTGHALMQAEAVVAPEDTILVLAGDIPLIQATSLQQLMESHRQKQATATVLSVNMQNPSGYGRILRDQQGAFLRIIEEKDANDEEKKIKEINSGIYCFCARKVFSALHSTSTRNAQGEYYLTEALELLKNQQESIGIFLSDGEEDIYGINDRVQLAQAENILRQRKNRELMLSGVSLMDPASTFIDSDVLIGHDTIILPFTIIEGNSRLGERCEIGPGTRISDSIIGSEVKIESSRLIQASVADRCNIGPFAYLRPETTLLEGVKVGDFVEIKKSTIGTGSKIPHLSYVGDATIGQGVNVGAGTITCNYDGKNKYQTVLEDRVFIGSNTNLVAPVRIGENSITGAGSTISRDVPPHTLAVERAGQKHLPRKG</sequence>
<protein>
    <recommendedName>
        <fullName evidence="1">Bifunctional protein GlmU</fullName>
    </recommendedName>
    <domain>
        <recommendedName>
            <fullName evidence="1">UDP-N-acetylglucosamine pyrophosphorylase</fullName>
            <ecNumber evidence="1">2.7.7.23</ecNumber>
        </recommendedName>
        <alternativeName>
            <fullName evidence="1">N-acetylglucosamine-1-phosphate uridyltransferase</fullName>
        </alternativeName>
    </domain>
    <domain>
        <recommendedName>
            <fullName evidence="1">Glucosamine-1-phosphate N-acetyltransferase</fullName>
            <ecNumber evidence="1">2.3.1.157</ecNumber>
        </recommendedName>
    </domain>
</protein>
<feature type="chain" id="PRO_0000263164" description="Bifunctional protein GlmU">
    <location>
        <begin position="1"/>
        <end position="449"/>
    </location>
</feature>
<feature type="region of interest" description="Pyrophosphorylase" evidence="1">
    <location>
        <begin position="1"/>
        <end position="229"/>
    </location>
</feature>
<feature type="region of interest" description="Linker" evidence="1">
    <location>
        <begin position="230"/>
        <end position="250"/>
    </location>
</feature>
<feature type="region of interest" description="N-acetyltransferase" evidence="1">
    <location>
        <begin position="251"/>
        <end position="449"/>
    </location>
</feature>
<feature type="active site" description="Proton acceptor" evidence="1">
    <location>
        <position position="362"/>
    </location>
</feature>
<feature type="binding site" evidence="1">
    <location>
        <begin position="8"/>
        <end position="11"/>
    </location>
    <ligand>
        <name>UDP-N-acetyl-alpha-D-glucosamine</name>
        <dbReference type="ChEBI" id="CHEBI:57705"/>
    </ligand>
</feature>
<feature type="binding site" evidence="1">
    <location>
        <position position="22"/>
    </location>
    <ligand>
        <name>UDP-N-acetyl-alpha-D-glucosamine</name>
        <dbReference type="ChEBI" id="CHEBI:57705"/>
    </ligand>
</feature>
<feature type="binding site" evidence="1">
    <location>
        <position position="73"/>
    </location>
    <ligand>
        <name>UDP-N-acetyl-alpha-D-glucosamine</name>
        <dbReference type="ChEBI" id="CHEBI:57705"/>
    </ligand>
</feature>
<feature type="binding site" evidence="1">
    <location>
        <begin position="78"/>
        <end position="79"/>
    </location>
    <ligand>
        <name>UDP-N-acetyl-alpha-D-glucosamine</name>
        <dbReference type="ChEBI" id="CHEBI:57705"/>
    </ligand>
</feature>
<feature type="binding site" evidence="1">
    <location>
        <position position="102"/>
    </location>
    <ligand>
        <name>Mg(2+)</name>
        <dbReference type="ChEBI" id="CHEBI:18420"/>
    </ligand>
</feature>
<feature type="binding site" evidence="1">
    <location>
        <position position="139"/>
    </location>
    <ligand>
        <name>UDP-N-acetyl-alpha-D-glucosamine</name>
        <dbReference type="ChEBI" id="CHEBI:57705"/>
    </ligand>
</feature>
<feature type="binding site" evidence="1">
    <location>
        <position position="154"/>
    </location>
    <ligand>
        <name>UDP-N-acetyl-alpha-D-glucosamine</name>
        <dbReference type="ChEBI" id="CHEBI:57705"/>
    </ligand>
</feature>
<feature type="binding site" evidence="1">
    <location>
        <position position="169"/>
    </location>
    <ligand>
        <name>UDP-N-acetyl-alpha-D-glucosamine</name>
        <dbReference type="ChEBI" id="CHEBI:57705"/>
    </ligand>
</feature>
<feature type="binding site" evidence="1">
    <location>
        <position position="227"/>
    </location>
    <ligand>
        <name>Mg(2+)</name>
        <dbReference type="ChEBI" id="CHEBI:18420"/>
    </ligand>
</feature>
<feature type="binding site" evidence="1">
    <location>
        <position position="227"/>
    </location>
    <ligand>
        <name>UDP-N-acetyl-alpha-D-glucosamine</name>
        <dbReference type="ChEBI" id="CHEBI:57705"/>
    </ligand>
</feature>
<feature type="binding site" evidence="1">
    <location>
        <position position="332"/>
    </location>
    <ligand>
        <name>UDP-N-acetyl-alpha-D-glucosamine</name>
        <dbReference type="ChEBI" id="CHEBI:57705"/>
    </ligand>
</feature>
<feature type="binding site" evidence="1">
    <location>
        <position position="350"/>
    </location>
    <ligand>
        <name>UDP-N-acetyl-alpha-D-glucosamine</name>
        <dbReference type="ChEBI" id="CHEBI:57705"/>
    </ligand>
</feature>
<feature type="binding site" evidence="1">
    <location>
        <position position="365"/>
    </location>
    <ligand>
        <name>UDP-N-acetyl-alpha-D-glucosamine</name>
        <dbReference type="ChEBI" id="CHEBI:57705"/>
    </ligand>
</feature>
<feature type="binding site" evidence="1">
    <location>
        <position position="376"/>
    </location>
    <ligand>
        <name>UDP-N-acetyl-alpha-D-glucosamine</name>
        <dbReference type="ChEBI" id="CHEBI:57705"/>
    </ligand>
</feature>
<feature type="binding site" evidence="1">
    <location>
        <position position="379"/>
    </location>
    <ligand>
        <name>acetyl-CoA</name>
        <dbReference type="ChEBI" id="CHEBI:57288"/>
    </ligand>
</feature>
<feature type="binding site" evidence="1">
    <location>
        <begin position="385"/>
        <end position="386"/>
    </location>
    <ligand>
        <name>acetyl-CoA</name>
        <dbReference type="ChEBI" id="CHEBI:57288"/>
    </ligand>
</feature>
<feature type="binding site" evidence="1">
    <location>
        <position position="404"/>
    </location>
    <ligand>
        <name>acetyl-CoA</name>
        <dbReference type="ChEBI" id="CHEBI:57288"/>
    </ligand>
</feature>
<feature type="binding site" evidence="1">
    <location>
        <position position="422"/>
    </location>
    <ligand>
        <name>acetyl-CoA</name>
        <dbReference type="ChEBI" id="CHEBI:57288"/>
    </ligand>
</feature>
<feature type="binding site" evidence="1">
    <location>
        <position position="439"/>
    </location>
    <ligand>
        <name>acetyl-CoA</name>
        <dbReference type="ChEBI" id="CHEBI:57288"/>
    </ligand>
</feature>
<dbReference type="EC" id="2.7.7.23" evidence="1"/>
<dbReference type="EC" id="2.3.1.157" evidence="1"/>
<dbReference type="EMBL" id="CP000448">
    <property type="protein sequence ID" value="ABI67425.1"/>
    <property type="molecule type" value="Genomic_DNA"/>
</dbReference>
<dbReference type="RefSeq" id="WP_011639536.1">
    <property type="nucleotide sequence ID" value="NC_008346.1"/>
</dbReference>
<dbReference type="SMR" id="Q0B0S9"/>
<dbReference type="STRING" id="335541.Swol_0067"/>
<dbReference type="KEGG" id="swo:Swol_0067"/>
<dbReference type="eggNOG" id="COG1207">
    <property type="taxonomic scope" value="Bacteria"/>
</dbReference>
<dbReference type="HOGENOM" id="CLU_029499_15_2_9"/>
<dbReference type="OrthoDB" id="9775031at2"/>
<dbReference type="UniPathway" id="UPA00113">
    <property type="reaction ID" value="UER00532"/>
</dbReference>
<dbReference type="UniPathway" id="UPA00113">
    <property type="reaction ID" value="UER00533"/>
</dbReference>
<dbReference type="UniPathway" id="UPA00973"/>
<dbReference type="Proteomes" id="UP000001968">
    <property type="component" value="Chromosome"/>
</dbReference>
<dbReference type="GO" id="GO:0005737">
    <property type="term" value="C:cytoplasm"/>
    <property type="evidence" value="ECO:0007669"/>
    <property type="project" value="UniProtKB-SubCell"/>
</dbReference>
<dbReference type="GO" id="GO:0016020">
    <property type="term" value="C:membrane"/>
    <property type="evidence" value="ECO:0007669"/>
    <property type="project" value="GOC"/>
</dbReference>
<dbReference type="GO" id="GO:0019134">
    <property type="term" value="F:glucosamine-1-phosphate N-acetyltransferase activity"/>
    <property type="evidence" value="ECO:0007669"/>
    <property type="project" value="UniProtKB-UniRule"/>
</dbReference>
<dbReference type="GO" id="GO:0000287">
    <property type="term" value="F:magnesium ion binding"/>
    <property type="evidence" value="ECO:0007669"/>
    <property type="project" value="UniProtKB-UniRule"/>
</dbReference>
<dbReference type="GO" id="GO:0003977">
    <property type="term" value="F:UDP-N-acetylglucosamine diphosphorylase activity"/>
    <property type="evidence" value="ECO:0007669"/>
    <property type="project" value="UniProtKB-UniRule"/>
</dbReference>
<dbReference type="GO" id="GO:0000902">
    <property type="term" value="P:cell morphogenesis"/>
    <property type="evidence" value="ECO:0007669"/>
    <property type="project" value="UniProtKB-UniRule"/>
</dbReference>
<dbReference type="GO" id="GO:0071555">
    <property type="term" value="P:cell wall organization"/>
    <property type="evidence" value="ECO:0007669"/>
    <property type="project" value="UniProtKB-KW"/>
</dbReference>
<dbReference type="GO" id="GO:0009245">
    <property type="term" value="P:lipid A biosynthetic process"/>
    <property type="evidence" value="ECO:0007669"/>
    <property type="project" value="UniProtKB-UniRule"/>
</dbReference>
<dbReference type="GO" id="GO:0009252">
    <property type="term" value="P:peptidoglycan biosynthetic process"/>
    <property type="evidence" value="ECO:0007669"/>
    <property type="project" value="UniProtKB-UniRule"/>
</dbReference>
<dbReference type="GO" id="GO:0008360">
    <property type="term" value="P:regulation of cell shape"/>
    <property type="evidence" value="ECO:0007669"/>
    <property type="project" value="UniProtKB-KW"/>
</dbReference>
<dbReference type="GO" id="GO:0006048">
    <property type="term" value="P:UDP-N-acetylglucosamine biosynthetic process"/>
    <property type="evidence" value="ECO:0007669"/>
    <property type="project" value="UniProtKB-UniPathway"/>
</dbReference>
<dbReference type="CDD" id="cd02540">
    <property type="entry name" value="GT2_GlmU_N_bac"/>
    <property type="match status" value="1"/>
</dbReference>
<dbReference type="CDD" id="cd03353">
    <property type="entry name" value="LbH_GlmU_C"/>
    <property type="match status" value="1"/>
</dbReference>
<dbReference type="Gene3D" id="2.160.10.10">
    <property type="entry name" value="Hexapeptide repeat proteins"/>
    <property type="match status" value="1"/>
</dbReference>
<dbReference type="Gene3D" id="3.90.550.10">
    <property type="entry name" value="Spore Coat Polysaccharide Biosynthesis Protein SpsA, Chain A"/>
    <property type="match status" value="1"/>
</dbReference>
<dbReference type="HAMAP" id="MF_01631">
    <property type="entry name" value="GlmU"/>
    <property type="match status" value="1"/>
</dbReference>
<dbReference type="InterPro" id="IPR005882">
    <property type="entry name" value="Bifunctional_GlmU"/>
</dbReference>
<dbReference type="InterPro" id="IPR050065">
    <property type="entry name" value="GlmU-like"/>
</dbReference>
<dbReference type="InterPro" id="IPR038009">
    <property type="entry name" value="GlmU_C_LbH"/>
</dbReference>
<dbReference type="InterPro" id="IPR001451">
    <property type="entry name" value="Hexapep"/>
</dbReference>
<dbReference type="InterPro" id="IPR025877">
    <property type="entry name" value="MobA-like_NTP_Trfase"/>
</dbReference>
<dbReference type="InterPro" id="IPR029044">
    <property type="entry name" value="Nucleotide-diphossugar_trans"/>
</dbReference>
<dbReference type="InterPro" id="IPR011004">
    <property type="entry name" value="Trimer_LpxA-like_sf"/>
</dbReference>
<dbReference type="NCBIfam" id="TIGR01173">
    <property type="entry name" value="glmU"/>
    <property type="match status" value="1"/>
</dbReference>
<dbReference type="NCBIfam" id="NF010934">
    <property type="entry name" value="PRK14354.1"/>
    <property type="match status" value="1"/>
</dbReference>
<dbReference type="PANTHER" id="PTHR43584:SF3">
    <property type="entry name" value="BIFUNCTIONAL PROTEIN GLMU"/>
    <property type="match status" value="1"/>
</dbReference>
<dbReference type="PANTHER" id="PTHR43584">
    <property type="entry name" value="NUCLEOTIDYL TRANSFERASE"/>
    <property type="match status" value="1"/>
</dbReference>
<dbReference type="Pfam" id="PF00132">
    <property type="entry name" value="Hexapep"/>
    <property type="match status" value="2"/>
</dbReference>
<dbReference type="Pfam" id="PF12804">
    <property type="entry name" value="NTP_transf_3"/>
    <property type="match status" value="1"/>
</dbReference>
<dbReference type="SUPFAM" id="SSF53448">
    <property type="entry name" value="Nucleotide-diphospho-sugar transferases"/>
    <property type="match status" value="1"/>
</dbReference>
<dbReference type="SUPFAM" id="SSF51161">
    <property type="entry name" value="Trimeric LpxA-like enzymes"/>
    <property type="match status" value="1"/>
</dbReference>
<accession>Q0B0S9</accession>
<evidence type="ECO:0000255" key="1">
    <source>
        <dbReference type="HAMAP-Rule" id="MF_01631"/>
    </source>
</evidence>
<proteinExistence type="inferred from homology"/>
<name>GLMU_SYNWW</name>
<gene>
    <name evidence="1" type="primary">glmU</name>
    <name type="ordered locus">Swol_0067</name>
</gene>